<comment type="function">
    <text evidence="1">Catalyzes the formation of methylglyoxal from dihydroxyacetone phosphate.</text>
</comment>
<comment type="catalytic activity">
    <reaction evidence="1">
        <text>dihydroxyacetone phosphate = methylglyoxal + phosphate</text>
        <dbReference type="Rhea" id="RHEA:17937"/>
        <dbReference type="ChEBI" id="CHEBI:17158"/>
        <dbReference type="ChEBI" id="CHEBI:43474"/>
        <dbReference type="ChEBI" id="CHEBI:57642"/>
        <dbReference type="EC" id="4.2.3.3"/>
    </reaction>
</comment>
<comment type="similarity">
    <text evidence="1">Belongs to the methylglyoxal synthase family.</text>
</comment>
<accession>B7HHT7</accession>
<protein>
    <recommendedName>
        <fullName evidence="1">Methylglyoxal synthase</fullName>
        <shortName evidence="1">MGS</shortName>
        <ecNumber evidence="1">4.2.3.3</ecNumber>
    </recommendedName>
</protein>
<dbReference type="EC" id="4.2.3.3" evidence="1"/>
<dbReference type="EMBL" id="CP001176">
    <property type="protein sequence ID" value="ACK58723.1"/>
    <property type="molecule type" value="Genomic_DNA"/>
</dbReference>
<dbReference type="RefSeq" id="WP_000684765.1">
    <property type="nucleotide sequence ID" value="NZ_VEHB01000003.1"/>
</dbReference>
<dbReference type="SMR" id="B7HHT7"/>
<dbReference type="GeneID" id="93009507"/>
<dbReference type="KEGG" id="bcb:BCB4264_A1589"/>
<dbReference type="HOGENOM" id="CLU_120420_1_0_9"/>
<dbReference type="Proteomes" id="UP000007096">
    <property type="component" value="Chromosome"/>
</dbReference>
<dbReference type="GO" id="GO:0005829">
    <property type="term" value="C:cytosol"/>
    <property type="evidence" value="ECO:0007669"/>
    <property type="project" value="TreeGrafter"/>
</dbReference>
<dbReference type="GO" id="GO:0008929">
    <property type="term" value="F:methylglyoxal synthase activity"/>
    <property type="evidence" value="ECO:0007669"/>
    <property type="project" value="UniProtKB-UniRule"/>
</dbReference>
<dbReference type="GO" id="GO:0019242">
    <property type="term" value="P:methylglyoxal biosynthetic process"/>
    <property type="evidence" value="ECO:0007669"/>
    <property type="project" value="UniProtKB-UniRule"/>
</dbReference>
<dbReference type="CDD" id="cd01422">
    <property type="entry name" value="MGS"/>
    <property type="match status" value="1"/>
</dbReference>
<dbReference type="FunFam" id="3.40.50.1380:FF:000006">
    <property type="entry name" value="Methylglyoxal synthase"/>
    <property type="match status" value="1"/>
</dbReference>
<dbReference type="Gene3D" id="3.40.50.1380">
    <property type="entry name" value="Methylglyoxal synthase-like domain"/>
    <property type="match status" value="1"/>
</dbReference>
<dbReference type="HAMAP" id="MF_00549">
    <property type="entry name" value="Methylglyoxal_synth"/>
    <property type="match status" value="1"/>
</dbReference>
<dbReference type="InterPro" id="IPR004363">
    <property type="entry name" value="Methylgl_synth"/>
</dbReference>
<dbReference type="InterPro" id="IPR018148">
    <property type="entry name" value="Methylglyoxal_synth_AS"/>
</dbReference>
<dbReference type="InterPro" id="IPR011607">
    <property type="entry name" value="MGS-like_dom"/>
</dbReference>
<dbReference type="InterPro" id="IPR036914">
    <property type="entry name" value="MGS-like_dom_sf"/>
</dbReference>
<dbReference type="NCBIfam" id="TIGR00160">
    <property type="entry name" value="MGSA"/>
    <property type="match status" value="1"/>
</dbReference>
<dbReference type="NCBIfam" id="NF003559">
    <property type="entry name" value="PRK05234.1"/>
    <property type="match status" value="1"/>
</dbReference>
<dbReference type="PANTHER" id="PTHR30492">
    <property type="entry name" value="METHYLGLYOXAL SYNTHASE"/>
    <property type="match status" value="1"/>
</dbReference>
<dbReference type="PANTHER" id="PTHR30492:SF0">
    <property type="entry name" value="METHYLGLYOXAL SYNTHASE"/>
    <property type="match status" value="1"/>
</dbReference>
<dbReference type="Pfam" id="PF02142">
    <property type="entry name" value="MGS"/>
    <property type="match status" value="1"/>
</dbReference>
<dbReference type="PIRSF" id="PIRSF006614">
    <property type="entry name" value="Methylglyox_syn"/>
    <property type="match status" value="1"/>
</dbReference>
<dbReference type="SMART" id="SM00851">
    <property type="entry name" value="MGS"/>
    <property type="match status" value="1"/>
</dbReference>
<dbReference type="SUPFAM" id="SSF52335">
    <property type="entry name" value="Methylglyoxal synthase-like"/>
    <property type="match status" value="1"/>
</dbReference>
<dbReference type="PROSITE" id="PS01335">
    <property type="entry name" value="METHYLGLYOXAL_SYNTH"/>
    <property type="match status" value="1"/>
</dbReference>
<dbReference type="PROSITE" id="PS51855">
    <property type="entry name" value="MGS"/>
    <property type="match status" value="1"/>
</dbReference>
<name>MGSA_BACC4</name>
<gene>
    <name evidence="1" type="primary">mgsA</name>
    <name type="ordered locus">BCB4264_A1589</name>
</gene>
<sequence>MKIALIAHDKKKNDMVSFAYAYKPIFEQHELFATGTTGLRIMEATGLVVTRYQSGPLGGDQEIGAMIAKNDLDMVIFFRDPLTAQPHEPDVNALLRLCDVYAIPLATNMASAEMLMHALERGDLDYRKLRK</sequence>
<reference key="1">
    <citation type="submission" date="2008-10" db="EMBL/GenBank/DDBJ databases">
        <title>Genome sequence of Bacillus cereus B4264.</title>
        <authorList>
            <person name="Dodson R.J."/>
            <person name="Durkin A.S."/>
            <person name="Rosovitz M.J."/>
            <person name="Rasko D.A."/>
            <person name="Hoffmaster A."/>
            <person name="Ravel J."/>
            <person name="Sutton G."/>
        </authorList>
    </citation>
    <scope>NUCLEOTIDE SEQUENCE [LARGE SCALE GENOMIC DNA]</scope>
    <source>
        <strain>B4264</strain>
    </source>
</reference>
<feature type="chain" id="PRO_1000128975" description="Methylglyoxal synthase">
    <location>
        <begin position="1"/>
        <end position="131"/>
    </location>
</feature>
<feature type="domain" description="MGS-like" evidence="1">
    <location>
        <begin position="1"/>
        <end position="131"/>
    </location>
</feature>
<feature type="active site" description="Proton donor/acceptor" evidence="1">
    <location>
        <position position="60"/>
    </location>
</feature>
<feature type="binding site" evidence="1">
    <location>
        <position position="8"/>
    </location>
    <ligand>
        <name>substrate</name>
    </ligand>
</feature>
<feature type="binding site" evidence="1">
    <location>
        <position position="12"/>
    </location>
    <ligand>
        <name>substrate</name>
    </ligand>
</feature>
<feature type="binding site" evidence="1">
    <location>
        <begin position="34"/>
        <end position="37"/>
    </location>
    <ligand>
        <name>substrate</name>
    </ligand>
</feature>
<feature type="binding site" evidence="1">
    <location>
        <begin position="54"/>
        <end position="55"/>
    </location>
    <ligand>
        <name>substrate</name>
    </ligand>
</feature>
<feature type="binding site" evidence="1">
    <location>
        <position position="87"/>
    </location>
    <ligand>
        <name>substrate</name>
    </ligand>
</feature>
<proteinExistence type="inferred from homology"/>
<organism>
    <name type="scientific">Bacillus cereus (strain B4264)</name>
    <dbReference type="NCBI Taxonomy" id="405532"/>
    <lineage>
        <taxon>Bacteria</taxon>
        <taxon>Bacillati</taxon>
        <taxon>Bacillota</taxon>
        <taxon>Bacilli</taxon>
        <taxon>Bacillales</taxon>
        <taxon>Bacillaceae</taxon>
        <taxon>Bacillus</taxon>
        <taxon>Bacillus cereus group</taxon>
    </lineage>
</organism>
<keyword id="KW-0456">Lyase</keyword>
<evidence type="ECO:0000255" key="1">
    <source>
        <dbReference type="HAMAP-Rule" id="MF_00549"/>
    </source>
</evidence>